<organism>
    <name type="scientific">Schizosaccharomyces pombe (strain 972 / ATCC 24843)</name>
    <name type="common">Fission yeast</name>
    <dbReference type="NCBI Taxonomy" id="284812"/>
    <lineage>
        <taxon>Eukaryota</taxon>
        <taxon>Fungi</taxon>
        <taxon>Dikarya</taxon>
        <taxon>Ascomycota</taxon>
        <taxon>Taphrinomycotina</taxon>
        <taxon>Schizosaccharomycetes</taxon>
        <taxon>Schizosaccharomycetales</taxon>
        <taxon>Schizosaccharomycetaceae</taxon>
        <taxon>Schizosaccharomyces</taxon>
    </lineage>
</organism>
<feature type="transit peptide" description="Mitochondrion" evidence="1">
    <location>
        <begin position="1"/>
        <end position="20"/>
    </location>
</feature>
<feature type="chain" id="PRO_0000304099" description="Uncharacterized protein C27E2.11c, mitochondrial">
    <location>
        <begin position="21"/>
        <end position="81"/>
    </location>
</feature>
<feature type="transmembrane region" description="Helical" evidence="1">
    <location>
        <begin position="59"/>
        <end position="79"/>
    </location>
</feature>
<feature type="region of interest" description="Disordered" evidence="2">
    <location>
        <begin position="27"/>
        <end position="53"/>
    </location>
</feature>
<feature type="compositionally biased region" description="Low complexity" evidence="2">
    <location>
        <begin position="28"/>
        <end position="53"/>
    </location>
</feature>
<proteinExistence type="predicted"/>
<name>YEIB_SCHPO</name>
<evidence type="ECO:0000255" key="1"/>
<evidence type="ECO:0000256" key="2">
    <source>
        <dbReference type="SAM" id="MobiDB-lite"/>
    </source>
</evidence>
<evidence type="ECO:0000305" key="3"/>
<sequence>MYSRVLSVAAIVTMALAVQAANSTAPYGNTTNSTGTTNGTNGTNTTTSSTATQSSAASITNFSSGAFVIAMIAVACSVMSL</sequence>
<accession>Q9UTA0</accession>
<gene>
    <name type="ORF">SPAC27E2.11c</name>
</gene>
<keyword id="KW-0472">Membrane</keyword>
<keyword id="KW-0496">Mitochondrion</keyword>
<keyword id="KW-1185">Reference proteome</keyword>
<keyword id="KW-0809">Transit peptide</keyword>
<keyword id="KW-0812">Transmembrane</keyword>
<keyword id="KW-1133">Transmembrane helix</keyword>
<protein>
    <recommendedName>
        <fullName>Uncharacterized protein C27E2.11c, mitochondrial</fullName>
    </recommendedName>
</protein>
<comment type="subcellular location">
    <subcellularLocation>
        <location evidence="3">Mitochondrion membrane</location>
        <topology evidence="3">Single-pass membrane protein</topology>
    </subcellularLocation>
</comment>
<dbReference type="EMBL" id="CU329670">
    <property type="protein sequence ID" value="CAB60473.1"/>
    <property type="molecule type" value="Genomic_DNA"/>
</dbReference>
<dbReference type="PIR" id="T38451">
    <property type="entry name" value="T38451"/>
</dbReference>
<dbReference type="RefSeq" id="NP_594404.1">
    <property type="nucleotide sequence ID" value="NM_001019835.2"/>
</dbReference>
<dbReference type="BioGRID" id="278333">
    <property type="interactions" value="4"/>
</dbReference>
<dbReference type="STRING" id="284812.Q9UTA0"/>
<dbReference type="PaxDb" id="4896-SPAC27E2.11c.1"/>
<dbReference type="EnsemblFungi" id="SPAC27E2.11c.1">
    <property type="protein sequence ID" value="SPAC27E2.11c.1:pep"/>
    <property type="gene ID" value="SPAC27E2.11c"/>
</dbReference>
<dbReference type="PomBase" id="SPAC27E2.11c"/>
<dbReference type="VEuPathDB" id="FungiDB:SPAC27E2.11c"/>
<dbReference type="HOGENOM" id="CLU_162181_0_0_1"/>
<dbReference type="InParanoid" id="Q9UTA0"/>
<dbReference type="OMA" id="YIPIHAR"/>
<dbReference type="PRO" id="PR:Q9UTA0"/>
<dbReference type="Proteomes" id="UP000002485">
    <property type="component" value="Chromosome I"/>
</dbReference>
<dbReference type="GO" id="GO:0009897">
    <property type="term" value="C:external side of plasma membrane"/>
    <property type="evidence" value="ECO:0000304"/>
    <property type="project" value="PomBase"/>
</dbReference>
<dbReference type="GO" id="GO:0031966">
    <property type="term" value="C:mitochondrial membrane"/>
    <property type="evidence" value="ECO:0007669"/>
    <property type="project" value="UniProtKB-SubCell"/>
</dbReference>
<dbReference type="GO" id="GO:0005739">
    <property type="term" value="C:mitochondrion"/>
    <property type="evidence" value="ECO:0007005"/>
    <property type="project" value="PomBase"/>
</dbReference>
<reference key="1">
    <citation type="journal article" date="2002" name="Nature">
        <title>The genome sequence of Schizosaccharomyces pombe.</title>
        <authorList>
            <person name="Wood V."/>
            <person name="Gwilliam R."/>
            <person name="Rajandream M.A."/>
            <person name="Lyne M.H."/>
            <person name="Lyne R."/>
            <person name="Stewart A."/>
            <person name="Sgouros J.G."/>
            <person name="Peat N."/>
            <person name="Hayles J."/>
            <person name="Baker S.G."/>
            <person name="Basham D."/>
            <person name="Bowman S."/>
            <person name="Brooks K."/>
            <person name="Brown D."/>
            <person name="Brown S."/>
            <person name="Chillingworth T."/>
            <person name="Churcher C.M."/>
            <person name="Collins M."/>
            <person name="Connor R."/>
            <person name="Cronin A."/>
            <person name="Davis P."/>
            <person name="Feltwell T."/>
            <person name="Fraser A."/>
            <person name="Gentles S."/>
            <person name="Goble A."/>
            <person name="Hamlin N."/>
            <person name="Harris D.E."/>
            <person name="Hidalgo J."/>
            <person name="Hodgson G."/>
            <person name="Holroyd S."/>
            <person name="Hornsby T."/>
            <person name="Howarth S."/>
            <person name="Huckle E.J."/>
            <person name="Hunt S."/>
            <person name="Jagels K."/>
            <person name="James K.D."/>
            <person name="Jones L."/>
            <person name="Jones M."/>
            <person name="Leather S."/>
            <person name="McDonald S."/>
            <person name="McLean J."/>
            <person name="Mooney P."/>
            <person name="Moule S."/>
            <person name="Mungall K.L."/>
            <person name="Murphy L.D."/>
            <person name="Niblett D."/>
            <person name="Odell C."/>
            <person name="Oliver K."/>
            <person name="O'Neil S."/>
            <person name="Pearson D."/>
            <person name="Quail M.A."/>
            <person name="Rabbinowitsch E."/>
            <person name="Rutherford K.M."/>
            <person name="Rutter S."/>
            <person name="Saunders D."/>
            <person name="Seeger K."/>
            <person name="Sharp S."/>
            <person name="Skelton J."/>
            <person name="Simmonds M.N."/>
            <person name="Squares R."/>
            <person name="Squares S."/>
            <person name="Stevens K."/>
            <person name="Taylor K."/>
            <person name="Taylor R.G."/>
            <person name="Tivey A."/>
            <person name="Walsh S.V."/>
            <person name="Warren T."/>
            <person name="Whitehead S."/>
            <person name="Woodward J.R."/>
            <person name="Volckaert G."/>
            <person name="Aert R."/>
            <person name="Robben J."/>
            <person name="Grymonprez B."/>
            <person name="Weltjens I."/>
            <person name="Vanstreels E."/>
            <person name="Rieger M."/>
            <person name="Schaefer M."/>
            <person name="Mueller-Auer S."/>
            <person name="Gabel C."/>
            <person name="Fuchs M."/>
            <person name="Duesterhoeft A."/>
            <person name="Fritzc C."/>
            <person name="Holzer E."/>
            <person name="Moestl D."/>
            <person name="Hilbert H."/>
            <person name="Borzym K."/>
            <person name="Langer I."/>
            <person name="Beck A."/>
            <person name="Lehrach H."/>
            <person name="Reinhardt R."/>
            <person name="Pohl T.M."/>
            <person name="Eger P."/>
            <person name="Zimmermann W."/>
            <person name="Wedler H."/>
            <person name="Wambutt R."/>
            <person name="Purnelle B."/>
            <person name="Goffeau A."/>
            <person name="Cadieu E."/>
            <person name="Dreano S."/>
            <person name="Gloux S."/>
            <person name="Lelaure V."/>
            <person name="Mottier S."/>
            <person name="Galibert F."/>
            <person name="Aves S.J."/>
            <person name="Xiang Z."/>
            <person name="Hunt C."/>
            <person name="Moore K."/>
            <person name="Hurst S.M."/>
            <person name="Lucas M."/>
            <person name="Rochet M."/>
            <person name="Gaillardin C."/>
            <person name="Tallada V.A."/>
            <person name="Garzon A."/>
            <person name="Thode G."/>
            <person name="Daga R.R."/>
            <person name="Cruzado L."/>
            <person name="Jimenez J."/>
            <person name="Sanchez M."/>
            <person name="del Rey F."/>
            <person name="Benito J."/>
            <person name="Dominguez A."/>
            <person name="Revuelta J.L."/>
            <person name="Moreno S."/>
            <person name="Armstrong J."/>
            <person name="Forsburg S.L."/>
            <person name="Cerutti L."/>
            <person name="Lowe T."/>
            <person name="McCombie W.R."/>
            <person name="Paulsen I."/>
            <person name="Potashkin J."/>
            <person name="Shpakovski G.V."/>
            <person name="Ussery D."/>
            <person name="Barrell B.G."/>
            <person name="Nurse P."/>
        </authorList>
    </citation>
    <scope>NUCLEOTIDE SEQUENCE [LARGE SCALE GENOMIC DNA]</scope>
    <source>
        <strain>972 / ATCC 24843</strain>
    </source>
</reference>
<reference key="2">
    <citation type="journal article" date="2006" name="Nat. Biotechnol.">
        <title>ORFeome cloning and global analysis of protein localization in the fission yeast Schizosaccharomyces pombe.</title>
        <authorList>
            <person name="Matsuyama A."/>
            <person name="Arai R."/>
            <person name="Yashiroda Y."/>
            <person name="Shirai A."/>
            <person name="Kamata A."/>
            <person name="Sekido S."/>
            <person name="Kobayashi Y."/>
            <person name="Hashimoto A."/>
            <person name="Hamamoto M."/>
            <person name="Hiraoka Y."/>
            <person name="Horinouchi S."/>
            <person name="Yoshida M."/>
        </authorList>
    </citation>
    <scope>SUBCELLULAR LOCATION [LARGE SCALE ANALYSIS]</scope>
</reference>